<keyword id="KW-0408">Iron</keyword>
<keyword id="KW-0456">Lyase</keyword>
<keyword id="KW-0464">Manganese</keyword>
<gene>
    <name evidence="1" type="primary">uxuA</name>
    <name type="ordered locus">BceJ2315_51210</name>
    <name type="ORF">BCAM1672</name>
</gene>
<organism>
    <name type="scientific">Burkholderia cenocepacia (strain ATCC BAA-245 / DSM 16553 / LMG 16656 / NCTC 13227 / J2315 / CF5610)</name>
    <name type="common">Burkholderia cepacia (strain J2315)</name>
    <dbReference type="NCBI Taxonomy" id="216591"/>
    <lineage>
        <taxon>Bacteria</taxon>
        <taxon>Pseudomonadati</taxon>
        <taxon>Pseudomonadota</taxon>
        <taxon>Betaproteobacteria</taxon>
        <taxon>Burkholderiales</taxon>
        <taxon>Burkholderiaceae</taxon>
        <taxon>Burkholderia</taxon>
        <taxon>Burkholderia cepacia complex</taxon>
    </lineage>
</organism>
<reference key="1">
    <citation type="journal article" date="2009" name="J. Bacteriol.">
        <title>The genome of Burkholderia cenocepacia J2315, an epidemic pathogen of cystic fibrosis patients.</title>
        <authorList>
            <person name="Holden M.T."/>
            <person name="Seth-Smith H.M."/>
            <person name="Crossman L.C."/>
            <person name="Sebaihia M."/>
            <person name="Bentley S.D."/>
            <person name="Cerdeno-Tarraga A.M."/>
            <person name="Thomson N.R."/>
            <person name="Bason N."/>
            <person name="Quail M.A."/>
            <person name="Sharp S."/>
            <person name="Cherevach I."/>
            <person name="Churcher C."/>
            <person name="Goodhead I."/>
            <person name="Hauser H."/>
            <person name="Holroyd N."/>
            <person name="Mungall K."/>
            <person name="Scott P."/>
            <person name="Walker D."/>
            <person name="White B."/>
            <person name="Rose H."/>
            <person name="Iversen P."/>
            <person name="Mil-Homens D."/>
            <person name="Rocha E.P."/>
            <person name="Fialho A.M."/>
            <person name="Baldwin A."/>
            <person name="Dowson C."/>
            <person name="Barrell B.G."/>
            <person name="Govan J.R."/>
            <person name="Vandamme P."/>
            <person name="Hart C.A."/>
            <person name="Mahenthiralingam E."/>
            <person name="Parkhill J."/>
        </authorList>
    </citation>
    <scope>NUCLEOTIDE SEQUENCE [LARGE SCALE GENOMIC DNA]</scope>
    <source>
        <strain>ATCC BAA-245 / DSM 16553 / LMG 16656 / NCTC 13227 / J2315 / CF5610</strain>
    </source>
</reference>
<dbReference type="EC" id="4.2.1.8" evidence="1"/>
<dbReference type="EMBL" id="AM747721">
    <property type="protein sequence ID" value="CAR55529.1"/>
    <property type="molecule type" value="Genomic_DNA"/>
</dbReference>
<dbReference type="SMR" id="B4EKS2"/>
<dbReference type="KEGG" id="bcj:BCAM1672"/>
<dbReference type="eggNOG" id="COG1312">
    <property type="taxonomic scope" value="Bacteria"/>
</dbReference>
<dbReference type="HOGENOM" id="CLU_058621_1_0_4"/>
<dbReference type="UniPathway" id="UPA00246"/>
<dbReference type="Proteomes" id="UP000001035">
    <property type="component" value="Chromosome 2"/>
</dbReference>
<dbReference type="GO" id="GO:0008198">
    <property type="term" value="F:ferrous iron binding"/>
    <property type="evidence" value="ECO:0007669"/>
    <property type="project" value="TreeGrafter"/>
</dbReference>
<dbReference type="GO" id="GO:0030145">
    <property type="term" value="F:manganese ion binding"/>
    <property type="evidence" value="ECO:0007669"/>
    <property type="project" value="TreeGrafter"/>
</dbReference>
<dbReference type="GO" id="GO:0008927">
    <property type="term" value="F:mannonate dehydratase activity"/>
    <property type="evidence" value="ECO:0007669"/>
    <property type="project" value="UniProtKB-UniRule"/>
</dbReference>
<dbReference type="GO" id="GO:0042840">
    <property type="term" value="P:D-glucuronate catabolic process"/>
    <property type="evidence" value="ECO:0007669"/>
    <property type="project" value="TreeGrafter"/>
</dbReference>
<dbReference type="Gene3D" id="3.20.20.150">
    <property type="entry name" value="Divalent-metal-dependent TIM barrel enzymes"/>
    <property type="match status" value="1"/>
</dbReference>
<dbReference type="HAMAP" id="MF_00106">
    <property type="entry name" value="UxuA"/>
    <property type="match status" value="1"/>
</dbReference>
<dbReference type="InterPro" id="IPR004628">
    <property type="entry name" value="Man_deHydtase"/>
</dbReference>
<dbReference type="InterPro" id="IPR036237">
    <property type="entry name" value="Xyl_isomerase-like_sf"/>
</dbReference>
<dbReference type="NCBIfam" id="NF003027">
    <property type="entry name" value="PRK03906.1"/>
    <property type="match status" value="2"/>
</dbReference>
<dbReference type="NCBIfam" id="TIGR00695">
    <property type="entry name" value="uxuA"/>
    <property type="match status" value="1"/>
</dbReference>
<dbReference type="PANTHER" id="PTHR30387">
    <property type="entry name" value="MANNONATE DEHYDRATASE"/>
    <property type="match status" value="1"/>
</dbReference>
<dbReference type="PANTHER" id="PTHR30387:SF2">
    <property type="entry name" value="MANNONATE DEHYDRATASE"/>
    <property type="match status" value="1"/>
</dbReference>
<dbReference type="Pfam" id="PF03786">
    <property type="entry name" value="UxuA"/>
    <property type="match status" value="1"/>
</dbReference>
<dbReference type="PIRSF" id="PIRSF016049">
    <property type="entry name" value="Man_dehyd"/>
    <property type="match status" value="1"/>
</dbReference>
<dbReference type="SUPFAM" id="SSF51658">
    <property type="entry name" value="Xylose isomerase-like"/>
    <property type="match status" value="1"/>
</dbReference>
<comment type="function">
    <text evidence="1">Catalyzes the dehydration of D-mannonate.</text>
</comment>
<comment type="catalytic activity">
    <reaction evidence="1">
        <text>D-mannonate = 2-dehydro-3-deoxy-D-gluconate + H2O</text>
        <dbReference type="Rhea" id="RHEA:20097"/>
        <dbReference type="ChEBI" id="CHEBI:15377"/>
        <dbReference type="ChEBI" id="CHEBI:17767"/>
        <dbReference type="ChEBI" id="CHEBI:57990"/>
        <dbReference type="EC" id="4.2.1.8"/>
    </reaction>
</comment>
<comment type="cofactor">
    <cofactor evidence="1">
        <name>Fe(2+)</name>
        <dbReference type="ChEBI" id="CHEBI:29033"/>
    </cofactor>
    <cofactor evidence="1">
        <name>Mn(2+)</name>
        <dbReference type="ChEBI" id="CHEBI:29035"/>
    </cofactor>
</comment>
<comment type="pathway">
    <text evidence="1">Carbohydrate metabolism; pentose and glucuronate interconversion.</text>
</comment>
<comment type="similarity">
    <text evidence="1">Belongs to the mannonate dehydratase family.</text>
</comment>
<name>UXUA_BURCJ</name>
<protein>
    <recommendedName>
        <fullName evidence="1">Mannonate dehydratase</fullName>
        <ecNumber evidence="1">4.2.1.8</ecNumber>
    </recommendedName>
    <alternativeName>
        <fullName evidence="1">D-mannonate hydro-lyase</fullName>
    </alternativeName>
</protein>
<sequence length="353" mass="39141">MKMSFRWYGESDPVSLQYIRQIPGVTHIVSAIYDEPVGEVWPAHKIEALKATIERAGLQFDVVESVPVHEDIKLGKPGRDRLIDHYRQTIRHLGAAGIRVVCYNFMPVFDWTRTELSKTLDDGSTCLAFSTDAVDRIDPNDGIALPGWDSSYRPEQLQALLADYRDVDENALWANLEYFLKAIIPVAEEAGVKMAIHPDDPPRPIFGLPRIVKNRDDLARIVRLVDSPANGLTLCSGSLGAGPENDVEALVREFGAMGRIHFAHIRNVKVDANGDFEETAHLSSCGSLDIAAIVKAYHDTGFTGYVRPDHGRMIWGETGKPGYGLYDRALGAVYLNGLWEALAKFDRAPQASQ</sequence>
<feature type="chain" id="PRO_1000094212" description="Mannonate dehydratase">
    <location>
        <begin position="1"/>
        <end position="353"/>
    </location>
</feature>
<accession>B4EKS2</accession>
<proteinExistence type="inferred from homology"/>
<evidence type="ECO:0000255" key="1">
    <source>
        <dbReference type="HAMAP-Rule" id="MF_00106"/>
    </source>
</evidence>